<name>SBMA_ECO57</name>
<accession>P0AFY7</accession>
<accession>P24212</accession>
<accession>P71313</accession>
<accession>P75702</accession>
<keyword id="KW-0997">Cell inner membrane</keyword>
<keyword id="KW-1003">Cell membrane</keyword>
<keyword id="KW-0472">Membrane</keyword>
<keyword id="KW-0571">Peptide transport</keyword>
<keyword id="KW-0653">Protein transport</keyword>
<keyword id="KW-1185">Reference proteome</keyword>
<keyword id="KW-0812">Transmembrane</keyword>
<keyword id="KW-1133">Transmembrane helix</keyword>
<keyword id="KW-0813">Transport</keyword>
<feature type="chain" id="PRO_0000097604" description="Peptide antibiotic transporter SbmA">
    <location>
        <begin position="1"/>
        <end position="406"/>
    </location>
</feature>
<feature type="topological domain" description="Periplasmic" evidence="2">
    <location>
        <begin position="1"/>
        <end position="11"/>
    </location>
</feature>
<feature type="transmembrane region" description="Helical" evidence="2">
    <location>
        <begin position="12"/>
        <end position="32"/>
    </location>
</feature>
<feature type="topological domain" description="Cytoplasmic" evidence="2">
    <location>
        <begin position="33"/>
        <end position="56"/>
    </location>
</feature>
<feature type="transmembrane region" description="Helical" evidence="2">
    <location>
        <begin position="57"/>
        <end position="77"/>
    </location>
</feature>
<feature type="topological domain" description="Periplasmic" evidence="2">
    <location>
        <begin position="78"/>
        <end position="87"/>
    </location>
</feature>
<feature type="transmembrane region" description="Helical" evidence="2">
    <location>
        <begin position="88"/>
        <end position="108"/>
    </location>
</feature>
<feature type="topological domain" description="Cytoplasmic" evidence="2">
    <location>
        <begin position="109"/>
        <end position="137"/>
    </location>
</feature>
<feature type="transmembrane region" description="Helical" evidence="2">
    <location>
        <begin position="138"/>
        <end position="158"/>
    </location>
</feature>
<feature type="topological domain" description="Periplasmic" evidence="2">
    <location>
        <begin position="159"/>
        <end position="205"/>
    </location>
</feature>
<feature type="transmembrane region" description="Helical" evidence="2">
    <location>
        <begin position="206"/>
        <end position="226"/>
    </location>
</feature>
<feature type="topological domain" description="Cytoplasmic" evidence="2">
    <location>
        <begin position="227"/>
        <end position="242"/>
    </location>
</feature>
<feature type="transmembrane region" description="Helical" evidence="2">
    <location>
        <begin position="243"/>
        <end position="263"/>
    </location>
</feature>
<feature type="topological domain" description="Periplasmic" evidence="2">
    <location>
        <begin position="264"/>
        <end position="331"/>
    </location>
</feature>
<feature type="transmembrane region" description="Helical" evidence="2">
    <location>
        <begin position="332"/>
        <end position="352"/>
    </location>
</feature>
<feature type="topological domain" description="Cytoplasmic" evidence="2">
    <location>
        <begin position="353"/>
        <end position="406"/>
    </location>
</feature>
<comment type="function">
    <text evidence="1">Uptake of antimicrobial peptides.</text>
</comment>
<comment type="subcellular location">
    <subcellularLocation>
        <location evidence="1">Cell inner membrane</location>
        <topology evidence="1">Multi-pass membrane protein</topology>
    </subcellularLocation>
</comment>
<comment type="similarity">
    <text evidence="3">Belongs to the peptide uptake permease (PUP) (TC 9.A.18) family.</text>
</comment>
<reference key="1">
    <citation type="journal article" date="2001" name="Nature">
        <title>Genome sequence of enterohaemorrhagic Escherichia coli O157:H7.</title>
        <authorList>
            <person name="Perna N.T."/>
            <person name="Plunkett G. III"/>
            <person name="Burland V."/>
            <person name="Mau B."/>
            <person name="Glasner J.D."/>
            <person name="Rose D.J."/>
            <person name="Mayhew G.F."/>
            <person name="Evans P.S."/>
            <person name="Gregor J."/>
            <person name="Kirkpatrick H.A."/>
            <person name="Posfai G."/>
            <person name="Hackett J."/>
            <person name="Klink S."/>
            <person name="Boutin A."/>
            <person name="Shao Y."/>
            <person name="Miller L."/>
            <person name="Grotbeck E.J."/>
            <person name="Davis N.W."/>
            <person name="Lim A."/>
            <person name="Dimalanta E.T."/>
            <person name="Potamousis K."/>
            <person name="Apodaca J."/>
            <person name="Anantharaman T.S."/>
            <person name="Lin J."/>
            <person name="Yen G."/>
            <person name="Schwartz D.C."/>
            <person name="Welch R.A."/>
            <person name="Blattner F.R."/>
        </authorList>
    </citation>
    <scope>NUCLEOTIDE SEQUENCE [LARGE SCALE GENOMIC DNA]</scope>
    <source>
        <strain>O157:H7 / EDL933 / ATCC 700927 / EHEC</strain>
    </source>
</reference>
<reference key="2">
    <citation type="journal article" date="2001" name="DNA Res.">
        <title>Complete genome sequence of enterohemorrhagic Escherichia coli O157:H7 and genomic comparison with a laboratory strain K-12.</title>
        <authorList>
            <person name="Hayashi T."/>
            <person name="Makino K."/>
            <person name="Ohnishi M."/>
            <person name="Kurokawa K."/>
            <person name="Ishii K."/>
            <person name="Yokoyama K."/>
            <person name="Han C.-G."/>
            <person name="Ohtsubo E."/>
            <person name="Nakayama K."/>
            <person name="Murata T."/>
            <person name="Tanaka M."/>
            <person name="Tobe T."/>
            <person name="Iida T."/>
            <person name="Takami H."/>
            <person name="Honda T."/>
            <person name="Sasakawa C."/>
            <person name="Ogasawara N."/>
            <person name="Yasunaga T."/>
            <person name="Kuhara S."/>
            <person name="Shiba T."/>
            <person name="Hattori M."/>
            <person name="Shinagawa H."/>
        </authorList>
    </citation>
    <scope>NUCLEOTIDE SEQUENCE [LARGE SCALE GENOMIC DNA]</scope>
    <source>
        <strain>O157:H7 / Sakai / RIMD 0509952 / EHEC</strain>
    </source>
</reference>
<proteinExistence type="inferred from homology"/>
<gene>
    <name type="primary">sbmA</name>
    <name type="ordered locus">Z0473</name>
    <name type="ordered locus">ECs0427</name>
</gene>
<evidence type="ECO:0000250" key="1"/>
<evidence type="ECO:0000255" key="2"/>
<evidence type="ECO:0000305" key="3"/>
<organism>
    <name type="scientific">Escherichia coli O157:H7</name>
    <dbReference type="NCBI Taxonomy" id="83334"/>
    <lineage>
        <taxon>Bacteria</taxon>
        <taxon>Pseudomonadati</taxon>
        <taxon>Pseudomonadota</taxon>
        <taxon>Gammaproteobacteria</taxon>
        <taxon>Enterobacterales</taxon>
        <taxon>Enterobacteriaceae</taxon>
        <taxon>Escherichia</taxon>
    </lineage>
</organism>
<sequence>MFKSFFPKPGTFFLSAFVWALIAVIFWQAGGGDWVARITGASGQIPISAARFWSLDFLIFYAYYIVCVGLFALFWFIYSPHRWQYWSILGTALIIFVTWFLVEVGVAVNAWYAPFYDLIQTALSSPHKVTIEQFYREVGVFLGIALIAVVISVLNNFFVSHYVFRWRTAMNEYYMANWQQLRHIEGAAQRVQEDTMRFASTLENMGVSFINAIMTLIAFLPVLVTLSAHVPELPIIGHIPYGLVIAAIVWSLMGTGLLAVVGIKLPGLEFKNQRVEAAYRKELVYGEDDATRATPPTVRELFSAVRKNYFRLYFHYMYFNIARILYLQVDNVFGLFLLFPSIVAGTITLGLMTQITNVFGQVRGAFQYLINSWTTLVELMSIYKRLRSFEHELDGDKIQEVTHTLS</sequence>
<protein>
    <recommendedName>
        <fullName>Peptide antibiotic transporter SbmA</fullName>
    </recommendedName>
</protein>
<dbReference type="EMBL" id="AE005174">
    <property type="protein sequence ID" value="AAG54723.1"/>
    <property type="molecule type" value="Genomic_DNA"/>
</dbReference>
<dbReference type="EMBL" id="BA000007">
    <property type="protein sequence ID" value="BAB33850.1"/>
    <property type="molecule type" value="Genomic_DNA"/>
</dbReference>
<dbReference type="PIR" id="C90682">
    <property type="entry name" value="C90682"/>
</dbReference>
<dbReference type="PIR" id="G85532">
    <property type="entry name" value="G85532"/>
</dbReference>
<dbReference type="RefSeq" id="NP_308454.1">
    <property type="nucleotide sequence ID" value="NC_002695.1"/>
</dbReference>
<dbReference type="RefSeq" id="WP_001301663.1">
    <property type="nucleotide sequence ID" value="NZ_VOAI01000005.1"/>
</dbReference>
<dbReference type="SMR" id="P0AFY7"/>
<dbReference type="STRING" id="155864.Z0473"/>
<dbReference type="GeneID" id="914529"/>
<dbReference type="KEGG" id="ece:Z0473"/>
<dbReference type="KEGG" id="ecs:ECs_0427"/>
<dbReference type="PATRIC" id="fig|386585.9.peg.522"/>
<dbReference type="eggNOG" id="COG1133">
    <property type="taxonomic scope" value="Bacteria"/>
</dbReference>
<dbReference type="HOGENOM" id="CLU_045533_0_0_6"/>
<dbReference type="OMA" id="HWVFRWR"/>
<dbReference type="Proteomes" id="UP000000558">
    <property type="component" value="Chromosome"/>
</dbReference>
<dbReference type="Proteomes" id="UP000002519">
    <property type="component" value="Chromosome"/>
</dbReference>
<dbReference type="GO" id="GO:0005886">
    <property type="term" value="C:plasma membrane"/>
    <property type="evidence" value="ECO:0007669"/>
    <property type="project" value="UniProtKB-SubCell"/>
</dbReference>
<dbReference type="GO" id="GO:0005524">
    <property type="term" value="F:ATP binding"/>
    <property type="evidence" value="ECO:0007669"/>
    <property type="project" value="InterPro"/>
</dbReference>
<dbReference type="GO" id="GO:1904680">
    <property type="term" value="F:peptide transmembrane transporter activity"/>
    <property type="evidence" value="ECO:0007669"/>
    <property type="project" value="InterPro"/>
</dbReference>
<dbReference type="GO" id="GO:0015833">
    <property type="term" value="P:peptide transport"/>
    <property type="evidence" value="ECO:0007669"/>
    <property type="project" value="UniProtKB-KW"/>
</dbReference>
<dbReference type="GO" id="GO:0015031">
    <property type="term" value="P:protein transport"/>
    <property type="evidence" value="ECO:0007669"/>
    <property type="project" value="UniProtKB-KW"/>
</dbReference>
<dbReference type="InterPro" id="IPR036640">
    <property type="entry name" value="ABC1_TM_sf"/>
</dbReference>
<dbReference type="InterPro" id="IPR050835">
    <property type="entry name" value="ABC_transporter_sub-D"/>
</dbReference>
<dbReference type="InterPro" id="IPR009248">
    <property type="entry name" value="SbmA_BacA"/>
</dbReference>
<dbReference type="NCBIfam" id="NF008306">
    <property type="entry name" value="PRK11098.1"/>
    <property type="match status" value="1"/>
</dbReference>
<dbReference type="NCBIfam" id="NF009036">
    <property type="entry name" value="PRK12369.1"/>
    <property type="match status" value="1"/>
</dbReference>
<dbReference type="PANTHER" id="PTHR11384">
    <property type="entry name" value="ATP-BINDING CASSETTE, SUB-FAMILY D MEMBER"/>
    <property type="match status" value="1"/>
</dbReference>
<dbReference type="PANTHER" id="PTHR11384:SF59">
    <property type="entry name" value="LYSOSOMAL COBALAMIN TRANSPORTER ABCD4"/>
    <property type="match status" value="1"/>
</dbReference>
<dbReference type="Pfam" id="PF05992">
    <property type="entry name" value="SbmA_BacA"/>
    <property type="match status" value="1"/>
</dbReference>
<dbReference type="SUPFAM" id="SSF90123">
    <property type="entry name" value="ABC transporter transmembrane region"/>
    <property type="match status" value="1"/>
</dbReference>